<name>STS6_POSPM</name>
<keyword id="KW-0456">Lyase</keyword>
<keyword id="KW-0460">Magnesium</keyword>
<keyword id="KW-0479">Metal-binding</keyword>
<evidence type="ECO:0000250" key="1">
    <source>
        <dbReference type="UniProtKB" id="B5HDJ6"/>
    </source>
</evidence>
<evidence type="ECO:0000250" key="2">
    <source>
        <dbReference type="UniProtKB" id="Q9UR08"/>
    </source>
</evidence>
<evidence type="ECO:0000269" key="3">
    <source>
    </source>
</evidence>
<evidence type="ECO:0000303" key="4">
    <source>
    </source>
</evidence>
<evidence type="ECO:0000305" key="5"/>
<evidence type="ECO:0000305" key="6">
    <source>
    </source>
</evidence>
<feature type="chain" id="PRO_0000451389" description="Sesquiterpene synthase 6">
    <location>
        <begin position="1"/>
        <end position="340"/>
    </location>
</feature>
<feature type="short sequence motif" description="DDXXD motif" evidence="6">
    <location>
        <begin position="90"/>
        <end position="94"/>
    </location>
</feature>
<feature type="short sequence motif" description="NSE/DTE motif" evidence="6">
    <location>
        <begin position="229"/>
        <end position="237"/>
    </location>
</feature>
<feature type="binding site" evidence="2">
    <location>
        <position position="90"/>
    </location>
    <ligand>
        <name>Mg(2+)</name>
        <dbReference type="ChEBI" id="CHEBI:18420"/>
        <label>1</label>
    </ligand>
</feature>
<feature type="binding site" evidence="2">
    <location>
        <position position="90"/>
    </location>
    <ligand>
        <name>Mg(2+)</name>
        <dbReference type="ChEBI" id="CHEBI:18420"/>
        <label>2</label>
    </ligand>
</feature>
<feature type="binding site" evidence="2">
    <location>
        <position position="229"/>
    </location>
    <ligand>
        <name>Mg(2+)</name>
        <dbReference type="ChEBI" id="CHEBI:18420"/>
        <label>3</label>
    </ligand>
</feature>
<feature type="binding site" evidence="2">
    <location>
        <position position="233"/>
    </location>
    <ligand>
        <name>Mg(2+)</name>
        <dbReference type="ChEBI" id="CHEBI:18420"/>
        <label>3</label>
    </ligand>
</feature>
<feature type="binding site" evidence="2">
    <location>
        <position position="237"/>
    </location>
    <ligand>
        <name>Mg(2+)</name>
        <dbReference type="ChEBI" id="CHEBI:18420"/>
        <label>3</label>
    </ligand>
</feature>
<feature type="binding site" evidence="2">
    <location>
        <position position="316"/>
    </location>
    <ligand>
        <name>(2E,6E)-farnesyl diphosphate</name>
        <dbReference type="ChEBI" id="CHEBI:175763"/>
    </ligand>
</feature>
<feature type="binding site" evidence="2">
    <location>
        <position position="317"/>
    </location>
    <ligand>
        <name>(2E,6E)-farnesyl diphosphate</name>
        <dbReference type="ChEBI" id="CHEBI:175763"/>
    </ligand>
</feature>
<feature type="site" description="Plays a critical role in the stabilization of intermediate cation" evidence="1">
    <location>
        <position position="87"/>
    </location>
</feature>
<dbReference type="EC" id="4.2.3.-" evidence="3"/>
<dbReference type="EC" id="4.2.3.100" evidence="3"/>
<dbReference type="EMBL" id="LC378428">
    <property type="protein sequence ID" value="BBD74520.1"/>
    <property type="molecule type" value="mRNA"/>
</dbReference>
<dbReference type="SMR" id="A0A348B782"/>
<dbReference type="GO" id="GO:0046872">
    <property type="term" value="F:metal ion binding"/>
    <property type="evidence" value="ECO:0007669"/>
    <property type="project" value="UniProtKB-KW"/>
</dbReference>
<dbReference type="GO" id="GO:0010333">
    <property type="term" value="F:terpene synthase activity"/>
    <property type="evidence" value="ECO:0007669"/>
    <property type="project" value="InterPro"/>
</dbReference>
<dbReference type="GO" id="GO:0008299">
    <property type="term" value="P:isoprenoid biosynthetic process"/>
    <property type="evidence" value="ECO:0007669"/>
    <property type="project" value="UniProtKB-ARBA"/>
</dbReference>
<dbReference type="Gene3D" id="1.10.600.10">
    <property type="entry name" value="Farnesyl Diphosphate Synthase"/>
    <property type="match status" value="1"/>
</dbReference>
<dbReference type="InterPro" id="IPR008949">
    <property type="entry name" value="Isoprenoid_synthase_dom_sf"/>
</dbReference>
<dbReference type="InterPro" id="IPR034686">
    <property type="entry name" value="Terpene_cyclase-like_2"/>
</dbReference>
<dbReference type="PANTHER" id="PTHR35201:SF4">
    <property type="entry name" value="BETA-PINACENE SYNTHASE-RELATED"/>
    <property type="match status" value="1"/>
</dbReference>
<dbReference type="PANTHER" id="PTHR35201">
    <property type="entry name" value="TERPENE SYNTHASE"/>
    <property type="match status" value="1"/>
</dbReference>
<dbReference type="Pfam" id="PF19086">
    <property type="entry name" value="Terpene_syn_C_2"/>
    <property type="match status" value="1"/>
</dbReference>
<dbReference type="SFLD" id="SFLDS00005">
    <property type="entry name" value="Isoprenoid_Synthase_Type_I"/>
    <property type="match status" value="1"/>
</dbReference>
<dbReference type="SFLD" id="SFLDG01020">
    <property type="entry name" value="Terpene_Cyclase_Like_2"/>
    <property type="match status" value="1"/>
</dbReference>
<dbReference type="SUPFAM" id="SSF48576">
    <property type="entry name" value="Terpenoid synthases"/>
    <property type="match status" value="1"/>
</dbReference>
<protein>
    <recommendedName>
        <fullName evidence="4">Sesquiterpene synthase 6</fullName>
        <ecNumber evidence="3">4.2.3.-</ecNumber>
        <ecNumber evidence="3">4.2.3.100</ecNumber>
    </recommendedName>
    <alternativeName>
        <fullName evidence="4">Terpene cyclase 6</fullName>
    </alternativeName>
</protein>
<gene>
    <name evidence="4" type="primary">PpSTS-06</name>
</gene>
<reference key="1">
    <citation type="journal article" date="2018" name="Microb. Biotechnol.">
        <title>Insight into metabolic diversity of the brown-rot basidiomycete Postia placenta responsible for sesquiterpene biosynthesis: semi-comprehensive screening of cytochrome P450 monooxygenase involved in protoilludene metabolism.</title>
        <authorList>
            <person name="Ichinose H."/>
            <person name="Kitaoka T."/>
        </authorList>
    </citation>
    <scope>NUCLEOTIDE SEQUENCE [MRNA]</scope>
    <scope>FUNCTION</scope>
    <scope>DOMAIN</scope>
    <scope>CATALYTIC ACTIVITY</scope>
    <source>
        <strain>ATCC 44394 / Madison 698-R</strain>
    </source>
</reference>
<accession>A0A348B782</accession>
<organism>
    <name type="scientific">Postia placenta (strain ATCC 44394 / Madison 698-R)</name>
    <name type="common">Brown rot fungus</name>
    <name type="synonym">Poria monticola</name>
    <dbReference type="NCBI Taxonomy" id="561896"/>
    <lineage>
        <taxon>Eukaryota</taxon>
        <taxon>Fungi</taxon>
        <taxon>Dikarya</taxon>
        <taxon>Basidiomycota</taxon>
        <taxon>Agaricomycotina</taxon>
        <taxon>Agaricomycetes</taxon>
        <taxon>Polyporales</taxon>
        <taxon>Adustoporiaceae</taxon>
        <taxon>Rhodonia</taxon>
    </lineage>
</organism>
<proteinExistence type="evidence at protein level"/>
<sequence>MTVIADTSRCFILPDLISYCQFPLRCNPHRDAAQSSTSWLINNYPGMSPEQLVEVRRLDADTLASYCYPDCDVERLRVASDFLAILFHLDDITDTMEEGGTEQLEGTIMDAFRSEGKLDQREDEPRVRVPAKDLWTRFIRNAKPCVQTRLRDNIALFFKTAREEARDRERGVLLDLESYINMRRGTSACLSCFALTEYSIGIELPQYVVDDPIVQALNQSANDLVSWSNDIYSFNNEQAHGIHNMIVILMKSQGLGMQDAIDYVSDLFKQTIDGFMENTQLLPSWGAAVDADVRLYVQGLQDWVVGNLHWSFATERYFGKRGAEIKATRVVELLPKKPVS</sequence>
<comment type="function">
    <text evidence="3">Terpene cyclase that catalyzes the cyclization of farnesyl diphosphate (FPP) to various sesquiterpenes, including bicycloelemene, alpha-gurjunene, 9-epi-caryophylene, bicyclosesquiphellandrene, bicyclogermacrene and delta-cadinene.</text>
</comment>
<comment type="catalytic activity">
    <reaction evidence="3">
        <text>(2E,6E)-farnesyl diphosphate = delta-cadinene + diphosphate</text>
        <dbReference type="Rhea" id="RHEA:56556"/>
        <dbReference type="ChEBI" id="CHEBI:33019"/>
        <dbReference type="ChEBI" id="CHEBI:140564"/>
        <dbReference type="ChEBI" id="CHEBI:175763"/>
    </reaction>
    <physiologicalReaction direction="left-to-right" evidence="3">
        <dbReference type="Rhea" id="RHEA:56557"/>
    </physiologicalReaction>
</comment>
<comment type="catalytic activity">
    <reaction evidence="3">
        <text>(2E,6E)-farnesyl diphosphate = bicyclogermacrene + diphosphate</text>
        <dbReference type="Rhea" id="RHEA:31999"/>
        <dbReference type="ChEBI" id="CHEBI:33019"/>
        <dbReference type="ChEBI" id="CHEBI:63709"/>
        <dbReference type="ChEBI" id="CHEBI:175763"/>
        <dbReference type="EC" id="4.2.3.100"/>
    </reaction>
    <physiologicalReaction direction="left-to-right" evidence="3">
        <dbReference type="Rhea" id="RHEA:32000"/>
    </physiologicalReaction>
</comment>
<comment type="cofactor">
    <cofactor evidence="3">
        <name>Mg(2+)</name>
        <dbReference type="ChEBI" id="CHEBI:18420"/>
    </cofactor>
</comment>
<comment type="domain">
    <text evidence="6">The conserved DDXXD and NSE/DTE motifs are important for the catalytic activity, presumably through binding to Mg(2+).</text>
</comment>
<comment type="similarity">
    <text evidence="5">Belongs to the terpene synthase family.</text>
</comment>